<evidence type="ECO:0000255" key="1">
    <source>
        <dbReference type="HAMAP-Rule" id="MF_00017"/>
    </source>
</evidence>
<gene>
    <name evidence="1" type="primary">recR</name>
    <name type="ordered locus">lpg2756</name>
</gene>
<sequence>MTMDALSRLVEALRCLPGVGPKSAQRMVFHLLQHQRQRGLHLASCLEQAMKHISHCQQCNNYTEQTLCALCQNPNRDSTLLCVVESPADVSAIEQSNSFQGKYFVLMGKISPLDGLGPDDIGLPKLKELITREKIQEVILALSPSVESQTTIHFIHQLLKDETVNISQLAHGIPSGGELEFLDGNTISSALKNRAVINV</sequence>
<dbReference type="EMBL" id="AE017354">
    <property type="protein sequence ID" value="AAU28807.1"/>
    <property type="molecule type" value="Genomic_DNA"/>
</dbReference>
<dbReference type="RefSeq" id="YP_096754.1">
    <property type="nucleotide sequence ID" value="NC_002942.5"/>
</dbReference>
<dbReference type="SMR" id="Q5ZRX0"/>
<dbReference type="STRING" id="272624.lpg2756"/>
<dbReference type="PaxDb" id="272624-lpg2756"/>
<dbReference type="KEGG" id="lpn:lpg2756"/>
<dbReference type="PATRIC" id="fig|272624.6.peg.2935"/>
<dbReference type="eggNOG" id="COG0353">
    <property type="taxonomic scope" value="Bacteria"/>
</dbReference>
<dbReference type="HOGENOM" id="CLU_060739_1_2_6"/>
<dbReference type="OrthoDB" id="9802672at2"/>
<dbReference type="Proteomes" id="UP000000609">
    <property type="component" value="Chromosome"/>
</dbReference>
<dbReference type="GO" id="GO:0003677">
    <property type="term" value="F:DNA binding"/>
    <property type="evidence" value="ECO:0007669"/>
    <property type="project" value="UniProtKB-UniRule"/>
</dbReference>
<dbReference type="GO" id="GO:0008270">
    <property type="term" value="F:zinc ion binding"/>
    <property type="evidence" value="ECO:0007669"/>
    <property type="project" value="UniProtKB-KW"/>
</dbReference>
<dbReference type="GO" id="GO:0006310">
    <property type="term" value="P:DNA recombination"/>
    <property type="evidence" value="ECO:0007669"/>
    <property type="project" value="UniProtKB-UniRule"/>
</dbReference>
<dbReference type="GO" id="GO:0006281">
    <property type="term" value="P:DNA repair"/>
    <property type="evidence" value="ECO:0007669"/>
    <property type="project" value="UniProtKB-UniRule"/>
</dbReference>
<dbReference type="CDD" id="cd01025">
    <property type="entry name" value="TOPRIM_recR"/>
    <property type="match status" value="1"/>
</dbReference>
<dbReference type="Gene3D" id="3.40.1360.10">
    <property type="match status" value="1"/>
</dbReference>
<dbReference type="Gene3D" id="1.10.8.420">
    <property type="entry name" value="RecR Domain 1"/>
    <property type="match status" value="1"/>
</dbReference>
<dbReference type="HAMAP" id="MF_00017">
    <property type="entry name" value="RecR"/>
    <property type="match status" value="1"/>
</dbReference>
<dbReference type="InterPro" id="IPR000093">
    <property type="entry name" value="DNA_Rcmb_RecR"/>
</dbReference>
<dbReference type="InterPro" id="IPR023627">
    <property type="entry name" value="Rcmb_RecR"/>
</dbReference>
<dbReference type="InterPro" id="IPR015967">
    <property type="entry name" value="Rcmb_RecR_Znf"/>
</dbReference>
<dbReference type="InterPro" id="IPR006171">
    <property type="entry name" value="TOPRIM_dom"/>
</dbReference>
<dbReference type="InterPro" id="IPR034137">
    <property type="entry name" value="TOPRIM_RecR"/>
</dbReference>
<dbReference type="NCBIfam" id="TIGR00615">
    <property type="entry name" value="recR"/>
    <property type="match status" value="1"/>
</dbReference>
<dbReference type="PANTHER" id="PTHR30446">
    <property type="entry name" value="RECOMBINATION PROTEIN RECR"/>
    <property type="match status" value="1"/>
</dbReference>
<dbReference type="PANTHER" id="PTHR30446:SF0">
    <property type="entry name" value="RECOMBINATION PROTEIN RECR"/>
    <property type="match status" value="1"/>
</dbReference>
<dbReference type="Pfam" id="PF21175">
    <property type="entry name" value="RecR_C"/>
    <property type="match status" value="1"/>
</dbReference>
<dbReference type="Pfam" id="PF21176">
    <property type="entry name" value="RecR_HhH"/>
    <property type="match status" value="1"/>
</dbReference>
<dbReference type="Pfam" id="PF02132">
    <property type="entry name" value="RecR_ZnF"/>
    <property type="match status" value="1"/>
</dbReference>
<dbReference type="Pfam" id="PF13662">
    <property type="entry name" value="Toprim_4"/>
    <property type="match status" value="1"/>
</dbReference>
<dbReference type="SMART" id="SM00493">
    <property type="entry name" value="TOPRIM"/>
    <property type="match status" value="1"/>
</dbReference>
<dbReference type="SUPFAM" id="SSF111304">
    <property type="entry name" value="Recombination protein RecR"/>
    <property type="match status" value="1"/>
</dbReference>
<dbReference type="PROSITE" id="PS01300">
    <property type="entry name" value="RECR"/>
    <property type="match status" value="1"/>
</dbReference>
<dbReference type="PROSITE" id="PS50880">
    <property type="entry name" value="TOPRIM"/>
    <property type="match status" value="1"/>
</dbReference>
<keyword id="KW-0227">DNA damage</keyword>
<keyword id="KW-0233">DNA recombination</keyword>
<keyword id="KW-0234">DNA repair</keyword>
<keyword id="KW-0479">Metal-binding</keyword>
<keyword id="KW-1185">Reference proteome</keyword>
<keyword id="KW-0862">Zinc</keyword>
<keyword id="KW-0863">Zinc-finger</keyword>
<accession>Q5ZRX0</accession>
<comment type="function">
    <text evidence="1">May play a role in DNA repair. It seems to be involved in an RecBC-independent recombinational process of DNA repair. It may act with RecF and RecO.</text>
</comment>
<comment type="similarity">
    <text evidence="1">Belongs to the RecR family.</text>
</comment>
<proteinExistence type="inferred from homology"/>
<feature type="chain" id="PRO_0000190338" description="Recombination protein RecR">
    <location>
        <begin position="1"/>
        <end position="199"/>
    </location>
</feature>
<feature type="domain" description="Toprim" evidence="1">
    <location>
        <begin position="79"/>
        <end position="174"/>
    </location>
</feature>
<feature type="zinc finger region" description="C4-type" evidence="1">
    <location>
        <begin position="56"/>
        <end position="71"/>
    </location>
</feature>
<protein>
    <recommendedName>
        <fullName evidence="1">Recombination protein RecR</fullName>
    </recommendedName>
</protein>
<reference key="1">
    <citation type="journal article" date="2004" name="Science">
        <title>The genomic sequence of the accidental pathogen Legionella pneumophila.</title>
        <authorList>
            <person name="Chien M."/>
            <person name="Morozova I."/>
            <person name="Shi S."/>
            <person name="Sheng H."/>
            <person name="Chen J."/>
            <person name="Gomez S.M."/>
            <person name="Asamani G."/>
            <person name="Hill K."/>
            <person name="Nuara J."/>
            <person name="Feder M."/>
            <person name="Rineer J."/>
            <person name="Greenberg J.J."/>
            <person name="Steshenko V."/>
            <person name="Park S.H."/>
            <person name="Zhao B."/>
            <person name="Teplitskaya E."/>
            <person name="Edwards J.R."/>
            <person name="Pampou S."/>
            <person name="Georghiou A."/>
            <person name="Chou I.-C."/>
            <person name="Iannuccilli W."/>
            <person name="Ulz M.E."/>
            <person name="Kim D.H."/>
            <person name="Geringer-Sameth A."/>
            <person name="Goldsberry C."/>
            <person name="Morozov P."/>
            <person name="Fischer S.G."/>
            <person name="Segal G."/>
            <person name="Qu X."/>
            <person name="Rzhetsky A."/>
            <person name="Zhang P."/>
            <person name="Cayanis E."/>
            <person name="De Jong P.J."/>
            <person name="Ju J."/>
            <person name="Kalachikov S."/>
            <person name="Shuman H.A."/>
            <person name="Russo J.J."/>
        </authorList>
    </citation>
    <scope>NUCLEOTIDE SEQUENCE [LARGE SCALE GENOMIC DNA]</scope>
    <source>
        <strain>Philadelphia 1 / ATCC 33152 / DSM 7513</strain>
    </source>
</reference>
<organism>
    <name type="scientific">Legionella pneumophila subsp. pneumophila (strain Philadelphia 1 / ATCC 33152 / DSM 7513)</name>
    <dbReference type="NCBI Taxonomy" id="272624"/>
    <lineage>
        <taxon>Bacteria</taxon>
        <taxon>Pseudomonadati</taxon>
        <taxon>Pseudomonadota</taxon>
        <taxon>Gammaproteobacteria</taxon>
        <taxon>Legionellales</taxon>
        <taxon>Legionellaceae</taxon>
        <taxon>Legionella</taxon>
    </lineage>
</organism>
<name>RECR_LEGPH</name>